<evidence type="ECO:0000255" key="1">
    <source>
        <dbReference type="HAMAP-Rule" id="MF_00505"/>
    </source>
</evidence>
<reference key="1">
    <citation type="submission" date="2007-11" db="EMBL/GenBank/DDBJ databases">
        <title>Complete sequence of chromosome of Shewanella baltica OS195.</title>
        <authorList>
            <consortium name="US DOE Joint Genome Institute"/>
            <person name="Copeland A."/>
            <person name="Lucas S."/>
            <person name="Lapidus A."/>
            <person name="Barry K."/>
            <person name="Glavina del Rio T."/>
            <person name="Dalin E."/>
            <person name="Tice H."/>
            <person name="Pitluck S."/>
            <person name="Chain P."/>
            <person name="Malfatti S."/>
            <person name="Shin M."/>
            <person name="Vergez L."/>
            <person name="Schmutz J."/>
            <person name="Larimer F."/>
            <person name="Land M."/>
            <person name="Hauser L."/>
            <person name="Kyrpides N."/>
            <person name="Kim E."/>
            <person name="Brettar I."/>
            <person name="Rodrigues J."/>
            <person name="Konstantinidis K."/>
            <person name="Klappenbach J."/>
            <person name="Hofle M."/>
            <person name="Tiedje J."/>
            <person name="Richardson P."/>
        </authorList>
    </citation>
    <scope>NUCLEOTIDE SEQUENCE [LARGE SCALE GENOMIC DNA]</scope>
    <source>
        <strain>OS195</strain>
    </source>
</reference>
<dbReference type="EMBL" id="CP000891">
    <property type="protein sequence ID" value="ABX49831.1"/>
    <property type="molecule type" value="Genomic_DNA"/>
</dbReference>
<dbReference type="RefSeq" id="WP_006086212.1">
    <property type="nucleotide sequence ID" value="NC_009997.1"/>
</dbReference>
<dbReference type="SMR" id="A9L569"/>
<dbReference type="GeneID" id="11772753"/>
<dbReference type="KEGG" id="sbn:Sbal195_2663"/>
<dbReference type="HOGENOM" id="CLU_006684_3_0_6"/>
<dbReference type="Proteomes" id="UP000000770">
    <property type="component" value="Chromosome"/>
</dbReference>
<dbReference type="GO" id="GO:0005737">
    <property type="term" value="C:cytoplasm"/>
    <property type="evidence" value="ECO:0007669"/>
    <property type="project" value="UniProtKB-SubCell"/>
</dbReference>
<dbReference type="GO" id="GO:0005524">
    <property type="term" value="F:ATP binding"/>
    <property type="evidence" value="ECO:0007669"/>
    <property type="project" value="UniProtKB-UniRule"/>
</dbReference>
<dbReference type="GO" id="GO:0016887">
    <property type="term" value="F:ATP hydrolysis activity"/>
    <property type="evidence" value="ECO:0007669"/>
    <property type="project" value="InterPro"/>
</dbReference>
<dbReference type="GO" id="GO:0140662">
    <property type="term" value="F:ATP-dependent protein folding chaperone"/>
    <property type="evidence" value="ECO:0007669"/>
    <property type="project" value="InterPro"/>
</dbReference>
<dbReference type="GO" id="GO:0051082">
    <property type="term" value="F:unfolded protein binding"/>
    <property type="evidence" value="ECO:0007669"/>
    <property type="project" value="UniProtKB-UniRule"/>
</dbReference>
<dbReference type="CDD" id="cd16927">
    <property type="entry name" value="HATPase_Hsp90-like"/>
    <property type="match status" value="1"/>
</dbReference>
<dbReference type="FunFam" id="3.30.230.80:FF:000002">
    <property type="entry name" value="Molecular chaperone HtpG"/>
    <property type="match status" value="1"/>
</dbReference>
<dbReference type="FunFam" id="3.30.565.10:FF:000009">
    <property type="entry name" value="Molecular chaperone HtpG"/>
    <property type="match status" value="1"/>
</dbReference>
<dbReference type="Gene3D" id="3.30.230.80">
    <property type="match status" value="1"/>
</dbReference>
<dbReference type="Gene3D" id="3.40.50.11260">
    <property type="match status" value="1"/>
</dbReference>
<dbReference type="Gene3D" id="1.20.120.790">
    <property type="entry name" value="Heat shock protein 90, C-terminal domain"/>
    <property type="match status" value="1"/>
</dbReference>
<dbReference type="Gene3D" id="3.30.565.10">
    <property type="entry name" value="Histidine kinase-like ATPase, C-terminal domain"/>
    <property type="match status" value="1"/>
</dbReference>
<dbReference type="HAMAP" id="MF_00505">
    <property type="entry name" value="HSP90"/>
    <property type="match status" value="1"/>
</dbReference>
<dbReference type="InterPro" id="IPR036890">
    <property type="entry name" value="HATPase_C_sf"/>
</dbReference>
<dbReference type="InterPro" id="IPR019805">
    <property type="entry name" value="Heat_shock_protein_90_CS"/>
</dbReference>
<dbReference type="InterPro" id="IPR037196">
    <property type="entry name" value="HSP90_C"/>
</dbReference>
<dbReference type="InterPro" id="IPR001404">
    <property type="entry name" value="Hsp90_fam"/>
</dbReference>
<dbReference type="InterPro" id="IPR020575">
    <property type="entry name" value="Hsp90_N"/>
</dbReference>
<dbReference type="InterPro" id="IPR020568">
    <property type="entry name" value="Ribosomal_Su5_D2-typ_SF"/>
</dbReference>
<dbReference type="NCBIfam" id="NF003555">
    <property type="entry name" value="PRK05218.1"/>
    <property type="match status" value="1"/>
</dbReference>
<dbReference type="PANTHER" id="PTHR11528">
    <property type="entry name" value="HEAT SHOCK PROTEIN 90 FAMILY MEMBER"/>
    <property type="match status" value="1"/>
</dbReference>
<dbReference type="Pfam" id="PF13589">
    <property type="entry name" value="HATPase_c_3"/>
    <property type="match status" value="1"/>
</dbReference>
<dbReference type="Pfam" id="PF00183">
    <property type="entry name" value="HSP90"/>
    <property type="match status" value="1"/>
</dbReference>
<dbReference type="PIRSF" id="PIRSF002583">
    <property type="entry name" value="Hsp90"/>
    <property type="match status" value="1"/>
</dbReference>
<dbReference type="PRINTS" id="PR00775">
    <property type="entry name" value="HEATSHOCK90"/>
</dbReference>
<dbReference type="SMART" id="SM00387">
    <property type="entry name" value="HATPase_c"/>
    <property type="match status" value="1"/>
</dbReference>
<dbReference type="SUPFAM" id="SSF55874">
    <property type="entry name" value="ATPase domain of HSP90 chaperone/DNA topoisomerase II/histidine kinase"/>
    <property type="match status" value="1"/>
</dbReference>
<dbReference type="SUPFAM" id="SSF110942">
    <property type="entry name" value="HSP90 C-terminal domain"/>
    <property type="match status" value="1"/>
</dbReference>
<dbReference type="SUPFAM" id="SSF54211">
    <property type="entry name" value="Ribosomal protein S5 domain 2-like"/>
    <property type="match status" value="1"/>
</dbReference>
<dbReference type="PROSITE" id="PS00298">
    <property type="entry name" value="HSP90"/>
    <property type="match status" value="1"/>
</dbReference>
<feature type="chain" id="PRO_1000081526" description="Chaperone protein HtpG">
    <location>
        <begin position="1"/>
        <end position="637"/>
    </location>
</feature>
<feature type="region of interest" description="A; substrate-binding" evidence="1">
    <location>
        <begin position="1"/>
        <end position="345"/>
    </location>
</feature>
<feature type="region of interest" description="B" evidence="1">
    <location>
        <begin position="346"/>
        <end position="562"/>
    </location>
</feature>
<feature type="region of interest" description="C" evidence="1">
    <location>
        <begin position="563"/>
        <end position="637"/>
    </location>
</feature>
<organism>
    <name type="scientific">Shewanella baltica (strain OS195)</name>
    <dbReference type="NCBI Taxonomy" id="399599"/>
    <lineage>
        <taxon>Bacteria</taxon>
        <taxon>Pseudomonadati</taxon>
        <taxon>Pseudomonadota</taxon>
        <taxon>Gammaproteobacteria</taxon>
        <taxon>Alteromonadales</taxon>
        <taxon>Shewanellaceae</taxon>
        <taxon>Shewanella</taxon>
    </lineage>
</organism>
<name>HTPG_SHEB9</name>
<protein>
    <recommendedName>
        <fullName evidence="1">Chaperone protein HtpG</fullName>
    </recommendedName>
    <alternativeName>
        <fullName evidence="1">Heat shock protein HtpG</fullName>
    </alternativeName>
    <alternativeName>
        <fullName evidence="1">High temperature protein G</fullName>
    </alternativeName>
</protein>
<gene>
    <name evidence="1" type="primary">htpG</name>
    <name type="ordered locus">Sbal195_2663</name>
</gene>
<comment type="function">
    <text evidence="1">Molecular chaperone. Has ATPase activity.</text>
</comment>
<comment type="subunit">
    <text evidence="1">Homodimer.</text>
</comment>
<comment type="subcellular location">
    <subcellularLocation>
        <location evidence="1">Cytoplasm</location>
    </subcellularLocation>
</comment>
<comment type="similarity">
    <text evidence="1">Belongs to the heat shock protein 90 family.</text>
</comment>
<sequence length="637" mass="71663">MSQQETHGFQTEVKQLLHLMIHSLYSNKEIFLRELVSNAADAADKLRYLALTNDALYEGDGELRVRISADKEKGTVTIEDNGVGMTRDGVIEHLGTIAKSGTADFFKNLSGESSKDSQLIGQFGVGFYSAFIVAKKVTVRTRAAGHKADEAVLWESEGEGNFTVDTITKASRGTEITLHLRDEEKEFADDWRLRSIITKYSDHISVPVEMWQEGTPESDGADGEKIPATEGQWKVMNKATALWMRSKADISDEEYQEFYKHISHDYTDALLWSHNRVEGKQEYTNLLYIPAKAPWDMWNRDRKHGLKLFVQRVFIMDDAEQFMPSYLRFVQGLIDSNDLPLNVSREILQDNHVTKAMRTGITKRVLGMLEKLAKDDAEKYQQFWAEFGQVLKEGPAEDFANRERIAGLLRFASTHTGSAAPTVSLDDYISRMKEGQTKIYYIVADSHEAAANSPHLELLRKKGIEVLLMSERIDEWLINHLTEYKEKQLHSVTRGDLELGELEDASEKEAQEKLEQESVALVERIKAALGSTVADVKVTSRLTDTPACVVAGEGEMSTQMIKLMQAAGQPVPEVKPTFEINPAHPLVSRLNDLQDEAAFADWSNLLLQQAQLSEKGSLADPSAFIKLMNQMLLANMK</sequence>
<proteinExistence type="inferred from homology"/>
<accession>A9L569</accession>
<keyword id="KW-0067">ATP-binding</keyword>
<keyword id="KW-0143">Chaperone</keyword>
<keyword id="KW-0963">Cytoplasm</keyword>
<keyword id="KW-0547">Nucleotide-binding</keyword>
<keyword id="KW-0346">Stress response</keyword>